<keyword id="KW-1185">Reference proteome</keyword>
<feature type="chain" id="PRO_0000384510" description="Uncharacterized protein ORF146">
    <location>
        <begin position="1"/>
        <end position="146"/>
    </location>
</feature>
<accession>Q573C3</accession>
<organism>
    <name type="scientific">Acidianus filamentous virus 2 (isolate Italy/Pozzuoli)</name>
    <name type="common">AFV-2</name>
    <dbReference type="NCBI Taxonomy" id="654910"/>
    <lineage>
        <taxon>Viruses</taxon>
        <taxon>Adnaviria</taxon>
        <taxon>Zilligvirae</taxon>
        <taxon>Taleaviricota</taxon>
        <taxon>Tokiviricetes</taxon>
        <taxon>Ligamenvirales</taxon>
        <taxon>Lipothrixviridae</taxon>
        <taxon>Deltalipothrixvirus</taxon>
        <taxon>Acidianus filamentous virus 2</taxon>
    </lineage>
</organism>
<proteinExistence type="predicted"/>
<sequence length="146" mass="16818">MTPAVQNSYIAFLISSNHHDPNLFLLLQNHASIRVMVRRRDIALTTVNEDDVEYEYEHLHSTLLSQIFGIADAVYPNPSRHLLIDMLKYSGYDNVDDWISDFCSSLPRNVARRSSYLCLHHGHASKWHNNKNVLVYLVTVVVNKIV</sequence>
<name>Y146_AFV2P</name>
<gene>
    <name type="ORF">ORF146</name>
</gene>
<dbReference type="EMBL" id="AJ854042">
    <property type="protein sequence ID" value="CAH69433.1"/>
    <property type="molecule type" value="Genomic_DNA"/>
</dbReference>
<dbReference type="RefSeq" id="YP_001496971.1">
    <property type="nucleotide sequence ID" value="NC_009884.1"/>
</dbReference>
<dbReference type="KEGG" id="vg:5656091"/>
<dbReference type="Proteomes" id="UP000006364">
    <property type="component" value="Genome"/>
</dbReference>
<organismHost>
    <name type="scientific">Acidianus sp. F28</name>
    <dbReference type="NCBI Taxonomy" id="315458"/>
</organismHost>
<reference key="1">
    <citation type="journal article" date="2005" name="J. Bacteriol.">
        <title>Structure and genome organization of AFV2, a novel archaeal lipothrixvirus with unusual terminal and core structures.</title>
        <authorList>
            <person name="Haring M."/>
            <person name="Vestergaard G."/>
            <person name="Brugger K."/>
            <person name="Rachel R."/>
            <person name="Garrett R.A."/>
            <person name="Prangishvili D."/>
        </authorList>
    </citation>
    <scope>NUCLEOTIDE SEQUENCE [GENOMIC DNA]</scope>
</reference>
<protein>
    <recommendedName>
        <fullName>Uncharacterized protein ORF146</fullName>
    </recommendedName>
</protein>